<name>TBP_PYRNV</name>
<accession>B1Y949</accession>
<protein>
    <recommendedName>
        <fullName evidence="1">TATA-box-binding protein</fullName>
    </recommendedName>
    <alternativeName>
        <fullName evidence="1">Box A-binding protein</fullName>
        <shortName evidence="1">BAP</shortName>
    </alternativeName>
    <alternativeName>
        <fullName evidence="1">TATA sequence-binding protein</fullName>
        <shortName evidence="1">TBP</shortName>
    </alternativeName>
    <alternativeName>
        <fullName evidence="1">TATA-box factor</fullName>
    </alternativeName>
</protein>
<reference key="1">
    <citation type="submission" date="2008-03" db="EMBL/GenBank/DDBJ databases">
        <title>Complete sequence of Thermoproteus neutrophilus V24Sta.</title>
        <authorList>
            <consortium name="US DOE Joint Genome Institute"/>
            <person name="Copeland A."/>
            <person name="Lucas S."/>
            <person name="Lapidus A."/>
            <person name="Glavina del Rio T."/>
            <person name="Dalin E."/>
            <person name="Tice H."/>
            <person name="Bruce D."/>
            <person name="Goodwin L."/>
            <person name="Pitluck S."/>
            <person name="Sims D."/>
            <person name="Brettin T."/>
            <person name="Detter J.C."/>
            <person name="Han C."/>
            <person name="Kuske C.R."/>
            <person name="Schmutz J."/>
            <person name="Larimer F."/>
            <person name="Land M."/>
            <person name="Hauser L."/>
            <person name="Kyrpides N."/>
            <person name="Mikhailova N."/>
            <person name="Biddle J.F."/>
            <person name="Zhang Z."/>
            <person name="Fitz-Gibbon S.T."/>
            <person name="Lowe T.M."/>
            <person name="Saltikov C."/>
            <person name="House C.H."/>
            <person name="Richardson P."/>
        </authorList>
    </citation>
    <scope>NUCLEOTIDE SEQUENCE [LARGE SCALE GENOMIC DNA]</scope>
    <source>
        <strain>DSM 2338 / JCM 9278 / NBRC 100436 / V24Sta</strain>
    </source>
</reference>
<sequence>MASKGPSYRIENIVATVNLGVELDLEKLAERLTMAEYNPDQFPGLILRLTKPRISALIFRTGKMVCTGAKNEEDLKNAVRALVKLLKDHGADVPFDPEVQIQNIVASGNLFAEVDLEQAVLMLENAMYEPEQFPGLIYRMSSPRVVILIFGSGKIVCTGAKSEKDVATAVQKLYNQLKDLGVLYIEEGEAEEGEEEL</sequence>
<feature type="chain" id="PRO_1000196666" description="TATA-box-binding protein">
    <location>
        <begin position="1"/>
        <end position="197"/>
    </location>
</feature>
<feature type="repeat" description="1">
    <location>
        <begin position="10"/>
        <end position="86"/>
    </location>
</feature>
<feature type="repeat" description="2">
    <location>
        <begin position="101"/>
        <end position="177"/>
    </location>
</feature>
<proteinExistence type="inferred from homology"/>
<dbReference type="EMBL" id="CP001014">
    <property type="protein sequence ID" value="ACB40278.1"/>
    <property type="molecule type" value="Genomic_DNA"/>
</dbReference>
<dbReference type="RefSeq" id="WP_012350697.1">
    <property type="nucleotide sequence ID" value="NC_010525.1"/>
</dbReference>
<dbReference type="SMR" id="B1Y949"/>
<dbReference type="STRING" id="444157.Tneu_1352"/>
<dbReference type="GeneID" id="6164758"/>
<dbReference type="KEGG" id="tne:Tneu_1352"/>
<dbReference type="eggNOG" id="arCOG01764">
    <property type="taxonomic scope" value="Archaea"/>
</dbReference>
<dbReference type="HOGENOM" id="CLU_060161_4_3_2"/>
<dbReference type="OrthoDB" id="350539at2157"/>
<dbReference type="Proteomes" id="UP000001694">
    <property type="component" value="Chromosome"/>
</dbReference>
<dbReference type="GO" id="GO:0003677">
    <property type="term" value="F:DNA binding"/>
    <property type="evidence" value="ECO:0007669"/>
    <property type="project" value="UniProtKB-KW"/>
</dbReference>
<dbReference type="GO" id="GO:0003700">
    <property type="term" value="F:DNA-binding transcription factor activity"/>
    <property type="evidence" value="ECO:0007669"/>
    <property type="project" value="UniProtKB-UniRule"/>
</dbReference>
<dbReference type="GO" id="GO:0006352">
    <property type="term" value="P:DNA-templated transcription initiation"/>
    <property type="evidence" value="ECO:0007669"/>
    <property type="project" value="InterPro"/>
</dbReference>
<dbReference type="CDD" id="cd04518">
    <property type="entry name" value="TBP_archaea"/>
    <property type="match status" value="1"/>
</dbReference>
<dbReference type="FunFam" id="3.30.310.10:FF:000007">
    <property type="entry name" value="TATA-box-binding protein"/>
    <property type="match status" value="1"/>
</dbReference>
<dbReference type="FunFam" id="3.30.310.10:FF:000010">
    <property type="entry name" value="TATA-box-binding protein"/>
    <property type="match status" value="1"/>
</dbReference>
<dbReference type="Gene3D" id="3.30.310.10">
    <property type="entry name" value="TATA-Binding Protein"/>
    <property type="match status" value="2"/>
</dbReference>
<dbReference type="HAMAP" id="MF_00408">
    <property type="entry name" value="TATA_bind_prot_arch"/>
    <property type="match status" value="1"/>
</dbReference>
<dbReference type="InterPro" id="IPR000814">
    <property type="entry name" value="TBP"/>
</dbReference>
<dbReference type="InterPro" id="IPR033711">
    <property type="entry name" value="TBP_archaea"/>
</dbReference>
<dbReference type="InterPro" id="IPR030491">
    <property type="entry name" value="TBP_CS"/>
</dbReference>
<dbReference type="InterPro" id="IPR012295">
    <property type="entry name" value="TBP_dom_sf"/>
</dbReference>
<dbReference type="NCBIfam" id="NF001592">
    <property type="entry name" value="PRK00394.1-1"/>
    <property type="match status" value="1"/>
</dbReference>
<dbReference type="NCBIfam" id="NF001593">
    <property type="entry name" value="PRK00394.1-2"/>
    <property type="match status" value="1"/>
</dbReference>
<dbReference type="PANTHER" id="PTHR10126">
    <property type="entry name" value="TATA-BOX BINDING PROTEIN"/>
    <property type="match status" value="1"/>
</dbReference>
<dbReference type="Pfam" id="PF00352">
    <property type="entry name" value="TBP"/>
    <property type="match status" value="2"/>
</dbReference>
<dbReference type="PRINTS" id="PR00686">
    <property type="entry name" value="TIFACTORIID"/>
</dbReference>
<dbReference type="SUPFAM" id="SSF55945">
    <property type="entry name" value="TATA-box binding protein-like"/>
    <property type="match status" value="2"/>
</dbReference>
<dbReference type="PROSITE" id="PS00351">
    <property type="entry name" value="TFIID"/>
    <property type="match status" value="2"/>
</dbReference>
<evidence type="ECO:0000255" key="1">
    <source>
        <dbReference type="HAMAP-Rule" id="MF_00408"/>
    </source>
</evidence>
<comment type="function">
    <text evidence="1">General factor that plays a role in the activation of archaeal genes transcribed by RNA polymerase. Binds specifically to the TATA box promoter element which lies close to the position of transcription initiation.</text>
</comment>
<comment type="similarity">
    <text evidence="1">Belongs to the TBP family.</text>
</comment>
<gene>
    <name evidence="1" type="primary">tbp</name>
    <name type="ordered locus">Tneu_1352</name>
</gene>
<organism>
    <name type="scientific">Pyrobaculum neutrophilum (strain DSM 2338 / JCM 9278 / NBRC 100436 / V24Sta)</name>
    <name type="common">Thermoproteus neutrophilus</name>
    <dbReference type="NCBI Taxonomy" id="444157"/>
    <lineage>
        <taxon>Archaea</taxon>
        <taxon>Thermoproteota</taxon>
        <taxon>Thermoprotei</taxon>
        <taxon>Thermoproteales</taxon>
        <taxon>Thermoproteaceae</taxon>
        <taxon>Pyrobaculum</taxon>
    </lineage>
</organism>
<keyword id="KW-0238">DNA-binding</keyword>
<keyword id="KW-0677">Repeat</keyword>
<keyword id="KW-0804">Transcription</keyword>
<keyword id="KW-0805">Transcription regulation</keyword>